<name>RL14_STRPD</name>
<protein>
    <recommendedName>
        <fullName evidence="1">Large ribosomal subunit protein uL14</fullName>
    </recommendedName>
    <alternativeName>
        <fullName evidence="2">50S ribosomal protein L14</fullName>
    </alternativeName>
</protein>
<feature type="chain" id="PRO_1000055721" description="Large ribosomal subunit protein uL14">
    <location>
        <begin position="1"/>
        <end position="122"/>
    </location>
</feature>
<organism>
    <name type="scientific">Streptococcus pyogenes serotype M2 (strain MGAS10270)</name>
    <dbReference type="NCBI Taxonomy" id="370552"/>
    <lineage>
        <taxon>Bacteria</taxon>
        <taxon>Bacillati</taxon>
        <taxon>Bacillota</taxon>
        <taxon>Bacilli</taxon>
        <taxon>Lactobacillales</taxon>
        <taxon>Streptococcaceae</taxon>
        <taxon>Streptococcus</taxon>
    </lineage>
</organism>
<accession>Q1JJ52</accession>
<evidence type="ECO:0000255" key="1">
    <source>
        <dbReference type="HAMAP-Rule" id="MF_01367"/>
    </source>
</evidence>
<evidence type="ECO:0000305" key="2"/>
<reference key="1">
    <citation type="journal article" date="2006" name="Proc. Natl. Acad. Sci. U.S.A.">
        <title>Molecular genetic anatomy of inter- and intraserotype variation in the human bacterial pathogen group A Streptococcus.</title>
        <authorList>
            <person name="Beres S.B."/>
            <person name="Richter E.W."/>
            <person name="Nagiec M.J."/>
            <person name="Sumby P."/>
            <person name="Porcella S.F."/>
            <person name="DeLeo F.R."/>
            <person name="Musser J.M."/>
        </authorList>
    </citation>
    <scope>NUCLEOTIDE SEQUENCE [LARGE SCALE GENOMIC DNA]</scope>
    <source>
        <strain>MGAS10270</strain>
    </source>
</reference>
<comment type="function">
    <text evidence="1">Binds to 23S rRNA. Forms part of two intersubunit bridges in the 70S ribosome.</text>
</comment>
<comment type="subunit">
    <text evidence="1">Part of the 50S ribosomal subunit. Forms a cluster with proteins L3 and L19. In the 70S ribosome, L14 and L19 interact and together make contacts with the 16S rRNA in bridges B5 and B8.</text>
</comment>
<comment type="similarity">
    <text evidence="1">Belongs to the universal ribosomal protein uL14 family.</text>
</comment>
<dbReference type="EMBL" id="CP000260">
    <property type="protein sequence ID" value="ABF33121.1"/>
    <property type="molecule type" value="Genomic_DNA"/>
</dbReference>
<dbReference type="SMR" id="Q1JJ52"/>
<dbReference type="KEGG" id="sph:MGAS10270_Spy0056"/>
<dbReference type="HOGENOM" id="CLU_095071_2_1_9"/>
<dbReference type="Proteomes" id="UP000002436">
    <property type="component" value="Chromosome"/>
</dbReference>
<dbReference type="GO" id="GO:0022625">
    <property type="term" value="C:cytosolic large ribosomal subunit"/>
    <property type="evidence" value="ECO:0007669"/>
    <property type="project" value="TreeGrafter"/>
</dbReference>
<dbReference type="GO" id="GO:0070180">
    <property type="term" value="F:large ribosomal subunit rRNA binding"/>
    <property type="evidence" value="ECO:0007669"/>
    <property type="project" value="TreeGrafter"/>
</dbReference>
<dbReference type="GO" id="GO:0003735">
    <property type="term" value="F:structural constituent of ribosome"/>
    <property type="evidence" value="ECO:0007669"/>
    <property type="project" value="InterPro"/>
</dbReference>
<dbReference type="GO" id="GO:0006412">
    <property type="term" value="P:translation"/>
    <property type="evidence" value="ECO:0007669"/>
    <property type="project" value="UniProtKB-UniRule"/>
</dbReference>
<dbReference type="CDD" id="cd00337">
    <property type="entry name" value="Ribosomal_uL14"/>
    <property type="match status" value="1"/>
</dbReference>
<dbReference type="FunFam" id="2.40.150.20:FF:000001">
    <property type="entry name" value="50S ribosomal protein L14"/>
    <property type="match status" value="1"/>
</dbReference>
<dbReference type="Gene3D" id="2.40.150.20">
    <property type="entry name" value="Ribosomal protein L14"/>
    <property type="match status" value="1"/>
</dbReference>
<dbReference type="HAMAP" id="MF_01367">
    <property type="entry name" value="Ribosomal_uL14"/>
    <property type="match status" value="1"/>
</dbReference>
<dbReference type="InterPro" id="IPR000218">
    <property type="entry name" value="Ribosomal_uL14"/>
</dbReference>
<dbReference type="InterPro" id="IPR005745">
    <property type="entry name" value="Ribosomal_uL14_bac-type"/>
</dbReference>
<dbReference type="InterPro" id="IPR019972">
    <property type="entry name" value="Ribosomal_uL14_CS"/>
</dbReference>
<dbReference type="InterPro" id="IPR036853">
    <property type="entry name" value="Ribosomal_uL14_sf"/>
</dbReference>
<dbReference type="NCBIfam" id="TIGR01067">
    <property type="entry name" value="rplN_bact"/>
    <property type="match status" value="1"/>
</dbReference>
<dbReference type="PANTHER" id="PTHR11761">
    <property type="entry name" value="50S/60S RIBOSOMAL PROTEIN L14/L23"/>
    <property type="match status" value="1"/>
</dbReference>
<dbReference type="PANTHER" id="PTHR11761:SF3">
    <property type="entry name" value="LARGE RIBOSOMAL SUBUNIT PROTEIN UL14M"/>
    <property type="match status" value="1"/>
</dbReference>
<dbReference type="Pfam" id="PF00238">
    <property type="entry name" value="Ribosomal_L14"/>
    <property type="match status" value="1"/>
</dbReference>
<dbReference type="SMART" id="SM01374">
    <property type="entry name" value="Ribosomal_L14"/>
    <property type="match status" value="1"/>
</dbReference>
<dbReference type="SUPFAM" id="SSF50193">
    <property type="entry name" value="Ribosomal protein L14"/>
    <property type="match status" value="1"/>
</dbReference>
<dbReference type="PROSITE" id="PS00049">
    <property type="entry name" value="RIBOSOMAL_L14"/>
    <property type="match status" value="1"/>
</dbReference>
<gene>
    <name evidence="1" type="primary">rplN</name>
    <name type="ordered locus">MGAS10270_Spy0056</name>
</gene>
<proteinExistence type="inferred from homology"/>
<keyword id="KW-0687">Ribonucleoprotein</keyword>
<keyword id="KW-0689">Ribosomal protein</keyword>
<keyword id="KW-0694">RNA-binding</keyword>
<keyword id="KW-0699">rRNA-binding</keyword>
<sequence length="122" mass="13042">MIQQETRLKVADNSGAREILTIKVLGGSGHKFANIGDVIVASVKQATPGGAVKKGDVVKAVIVRTKTGARRPDGSYIKFDDNAAVIIRDDKTPRGTRIFGPVARELREGGYMKIVSLAPEVL</sequence>